<keyword id="KW-0028">Amino-acid biosynthesis</keyword>
<keyword id="KW-0963">Cytoplasm</keyword>
<keyword id="KW-0521">NADP</keyword>
<keyword id="KW-0560">Oxidoreductase</keyword>
<keyword id="KW-0641">Proline biosynthesis</keyword>
<proteinExistence type="inferred from homology"/>
<dbReference type="EC" id="1.2.1.41" evidence="1"/>
<dbReference type="EMBL" id="CP000111">
    <property type="protein sequence ID" value="ABB49651.1"/>
    <property type="molecule type" value="Genomic_DNA"/>
</dbReference>
<dbReference type="RefSeq" id="WP_011376146.1">
    <property type="nucleotide sequence ID" value="NC_007577.1"/>
</dbReference>
<dbReference type="SMR" id="Q31BU4"/>
<dbReference type="STRING" id="74546.PMT9312_0590"/>
<dbReference type="KEGG" id="pmi:PMT9312_0590"/>
<dbReference type="eggNOG" id="COG0014">
    <property type="taxonomic scope" value="Bacteria"/>
</dbReference>
<dbReference type="HOGENOM" id="CLU_030231_0_1_3"/>
<dbReference type="OrthoDB" id="9809970at2"/>
<dbReference type="UniPathway" id="UPA00098">
    <property type="reaction ID" value="UER00360"/>
</dbReference>
<dbReference type="Proteomes" id="UP000002715">
    <property type="component" value="Chromosome"/>
</dbReference>
<dbReference type="GO" id="GO:0005737">
    <property type="term" value="C:cytoplasm"/>
    <property type="evidence" value="ECO:0007669"/>
    <property type="project" value="UniProtKB-SubCell"/>
</dbReference>
<dbReference type="GO" id="GO:0004350">
    <property type="term" value="F:glutamate-5-semialdehyde dehydrogenase activity"/>
    <property type="evidence" value="ECO:0007669"/>
    <property type="project" value="UniProtKB-UniRule"/>
</dbReference>
<dbReference type="GO" id="GO:0050661">
    <property type="term" value="F:NADP binding"/>
    <property type="evidence" value="ECO:0007669"/>
    <property type="project" value="InterPro"/>
</dbReference>
<dbReference type="GO" id="GO:0055129">
    <property type="term" value="P:L-proline biosynthetic process"/>
    <property type="evidence" value="ECO:0007669"/>
    <property type="project" value="UniProtKB-UniRule"/>
</dbReference>
<dbReference type="CDD" id="cd07079">
    <property type="entry name" value="ALDH_F18-19_ProA-GPR"/>
    <property type="match status" value="1"/>
</dbReference>
<dbReference type="FunFam" id="3.40.309.10:FF:000006">
    <property type="entry name" value="Gamma-glutamyl phosphate reductase"/>
    <property type="match status" value="1"/>
</dbReference>
<dbReference type="Gene3D" id="3.40.605.10">
    <property type="entry name" value="Aldehyde Dehydrogenase, Chain A, domain 1"/>
    <property type="match status" value="1"/>
</dbReference>
<dbReference type="Gene3D" id="3.40.309.10">
    <property type="entry name" value="Aldehyde Dehydrogenase, Chain A, domain 2"/>
    <property type="match status" value="1"/>
</dbReference>
<dbReference type="HAMAP" id="MF_00412">
    <property type="entry name" value="ProA"/>
    <property type="match status" value="1"/>
</dbReference>
<dbReference type="InterPro" id="IPR016161">
    <property type="entry name" value="Ald_DH/histidinol_DH"/>
</dbReference>
<dbReference type="InterPro" id="IPR016163">
    <property type="entry name" value="Ald_DH_C"/>
</dbReference>
<dbReference type="InterPro" id="IPR016162">
    <property type="entry name" value="Ald_DH_N"/>
</dbReference>
<dbReference type="InterPro" id="IPR015590">
    <property type="entry name" value="Aldehyde_DH_dom"/>
</dbReference>
<dbReference type="InterPro" id="IPR020593">
    <property type="entry name" value="G-glutamylP_reductase_CS"/>
</dbReference>
<dbReference type="InterPro" id="IPR012134">
    <property type="entry name" value="Glu-5-SA_DH"/>
</dbReference>
<dbReference type="InterPro" id="IPR000965">
    <property type="entry name" value="GPR_dom"/>
</dbReference>
<dbReference type="NCBIfam" id="NF001221">
    <property type="entry name" value="PRK00197.1"/>
    <property type="match status" value="1"/>
</dbReference>
<dbReference type="NCBIfam" id="TIGR00407">
    <property type="entry name" value="proA"/>
    <property type="match status" value="1"/>
</dbReference>
<dbReference type="PANTHER" id="PTHR11063:SF8">
    <property type="entry name" value="DELTA-1-PYRROLINE-5-CARBOXYLATE SYNTHASE"/>
    <property type="match status" value="1"/>
</dbReference>
<dbReference type="PANTHER" id="PTHR11063">
    <property type="entry name" value="GLUTAMATE SEMIALDEHYDE DEHYDROGENASE"/>
    <property type="match status" value="1"/>
</dbReference>
<dbReference type="Pfam" id="PF00171">
    <property type="entry name" value="Aldedh"/>
    <property type="match status" value="1"/>
</dbReference>
<dbReference type="PIRSF" id="PIRSF000151">
    <property type="entry name" value="GPR"/>
    <property type="match status" value="1"/>
</dbReference>
<dbReference type="SUPFAM" id="SSF53720">
    <property type="entry name" value="ALDH-like"/>
    <property type="match status" value="1"/>
</dbReference>
<dbReference type="PROSITE" id="PS01223">
    <property type="entry name" value="PROA"/>
    <property type="match status" value="1"/>
</dbReference>
<name>PROA_PROM9</name>
<accession>Q31BU4</accession>
<sequence>MANIFEVPQPGNDLLEKADQVRLASIKISQTENHNRIKALNSMADCLEKSTKEILEANNEDYTRAQKKGISKALLSRLKLSKEKLNSGIEGVRKVGDLADPVNQVQIKRELAKGLILERKTVPIGVLGVIFESRPDAVMQISSLAIRSGNGVMLKGGSEANLTNTAIVKALKKGLYESGLDKNAICLLTSRKDSMSMLNLEKYINLIIPRGSNELVKFIQENTRIPVLGHADGICHLFIDNEANLEMALSVALDSKIQYPAACNAIETLLVHKDIAQVFLEKAIPLFNSNDVKLIGDKRTVELGVKYEASVEDWQTEYLDLILSIKIVDDLEEAINHIQKFSSKHTDGIITENSTSAKKFMNVVDSAGVFHNCSTRFADGFRYGFGAEIGISTQTLPPRGPVGLEGLVTYKYFLNGDGNIVDDFSSGKAIYTHKDL</sequence>
<evidence type="ECO:0000255" key="1">
    <source>
        <dbReference type="HAMAP-Rule" id="MF_00412"/>
    </source>
</evidence>
<organism>
    <name type="scientific">Prochlorococcus marinus (strain MIT 9312)</name>
    <dbReference type="NCBI Taxonomy" id="74546"/>
    <lineage>
        <taxon>Bacteria</taxon>
        <taxon>Bacillati</taxon>
        <taxon>Cyanobacteriota</taxon>
        <taxon>Cyanophyceae</taxon>
        <taxon>Synechococcales</taxon>
        <taxon>Prochlorococcaceae</taxon>
        <taxon>Prochlorococcus</taxon>
    </lineage>
</organism>
<feature type="chain" id="PRO_0000230011" description="Gamma-glutamyl phosphate reductase">
    <location>
        <begin position="1"/>
        <end position="436"/>
    </location>
</feature>
<reference key="1">
    <citation type="journal article" date="2006" name="Science">
        <title>Genomic islands and the ecology and evolution of Prochlorococcus.</title>
        <authorList>
            <person name="Coleman M.L."/>
            <person name="Sullivan M.B."/>
            <person name="Martiny A.C."/>
            <person name="Steglich C."/>
            <person name="Barry K."/>
            <person name="Delong E.F."/>
            <person name="Chisholm S.W."/>
        </authorList>
    </citation>
    <scope>NUCLEOTIDE SEQUENCE [LARGE SCALE GENOMIC DNA]</scope>
    <source>
        <strain>MIT 9312</strain>
    </source>
</reference>
<protein>
    <recommendedName>
        <fullName evidence="1">Gamma-glutamyl phosphate reductase</fullName>
        <shortName evidence="1">GPR</shortName>
        <ecNumber evidence="1">1.2.1.41</ecNumber>
    </recommendedName>
    <alternativeName>
        <fullName evidence="1">Glutamate-5-semialdehyde dehydrogenase</fullName>
    </alternativeName>
    <alternativeName>
        <fullName evidence="1">Glutamyl-gamma-semialdehyde dehydrogenase</fullName>
        <shortName evidence="1">GSA dehydrogenase</shortName>
    </alternativeName>
</protein>
<gene>
    <name evidence="1" type="primary">proA</name>
    <name type="ordered locus">PMT9312_0590</name>
</gene>
<comment type="function">
    <text evidence="1">Catalyzes the NADPH-dependent reduction of L-glutamate 5-phosphate into L-glutamate 5-semialdehyde and phosphate. The product spontaneously undergoes cyclization to form 1-pyrroline-5-carboxylate.</text>
</comment>
<comment type="catalytic activity">
    <reaction evidence="1">
        <text>L-glutamate 5-semialdehyde + phosphate + NADP(+) = L-glutamyl 5-phosphate + NADPH + H(+)</text>
        <dbReference type="Rhea" id="RHEA:19541"/>
        <dbReference type="ChEBI" id="CHEBI:15378"/>
        <dbReference type="ChEBI" id="CHEBI:43474"/>
        <dbReference type="ChEBI" id="CHEBI:57783"/>
        <dbReference type="ChEBI" id="CHEBI:58066"/>
        <dbReference type="ChEBI" id="CHEBI:58274"/>
        <dbReference type="ChEBI" id="CHEBI:58349"/>
        <dbReference type="EC" id="1.2.1.41"/>
    </reaction>
</comment>
<comment type="pathway">
    <text evidence="1">Amino-acid biosynthesis; L-proline biosynthesis; L-glutamate 5-semialdehyde from L-glutamate: step 2/2.</text>
</comment>
<comment type="subcellular location">
    <subcellularLocation>
        <location evidence="1">Cytoplasm</location>
    </subcellularLocation>
</comment>
<comment type="similarity">
    <text evidence="1">Belongs to the gamma-glutamyl phosphate reductase family.</text>
</comment>